<geneLocation type="plasmid">
    <name>megaplasmid pHG1</name>
</geneLocation>
<comment type="function">
    <text>This enzyme recycles the H(2) produced by nitrogenase to increase the production of ATP and to protect nitrogenase against inhibition or damage by O(2) under carbon- or phosphate-limited conditions.</text>
</comment>
<comment type="catalytic activity">
    <reaction>
        <text>H2 + A = AH2</text>
        <dbReference type="Rhea" id="RHEA:12116"/>
        <dbReference type="ChEBI" id="CHEBI:13193"/>
        <dbReference type="ChEBI" id="CHEBI:17499"/>
        <dbReference type="ChEBI" id="CHEBI:18276"/>
        <dbReference type="EC" id="1.12.99.6"/>
    </reaction>
</comment>
<comment type="cofactor">
    <cofactor evidence="1">
        <name>[4Fe-4S] cluster</name>
        <dbReference type="ChEBI" id="CHEBI:49883"/>
    </cofactor>
    <text evidence="1">Binds 2 [4Fe-4S] clusters.</text>
</comment>
<comment type="cofactor">
    <cofactor evidence="1">
        <name>[3Fe-4S] cluster</name>
        <dbReference type="ChEBI" id="CHEBI:21137"/>
    </cofactor>
    <text evidence="1">Binds 1 [3Fe-4S] cluster.</text>
</comment>
<comment type="subunit">
    <text>Heterodimer of a large and a small subunit.</text>
</comment>
<comment type="interaction">
    <interactant intactId="EBI-15948434">
        <id>P31892</id>
    </interactant>
    <interactant intactId="EBI-15948409">
        <id>P31891</id>
        <label>hoxG</label>
    </interactant>
    <organismsDiffer>false</organismsDiffer>
    <experiments>3</experiments>
</comment>
<comment type="subcellular location">
    <subcellularLocation>
        <location>Cell membrane</location>
        <topology>Peripheral membrane protein</topology>
    </subcellularLocation>
</comment>
<comment type="PTM">
    <text>Predicted to be exported by the Tat system. The position of the signal peptide cleavage has been experimentally proven.</text>
</comment>
<comment type="similarity">
    <text evidence="4">Belongs to the [NiFe]/[NiFeSe] hydrogenase small subunit family.</text>
</comment>
<evidence type="ECO:0000250" key="1">
    <source>
        <dbReference type="UniProtKB" id="P21853"/>
    </source>
</evidence>
<evidence type="ECO:0000255" key="2">
    <source>
        <dbReference type="PROSITE-ProRule" id="PRU00648"/>
    </source>
</evidence>
<evidence type="ECO:0000269" key="3">
    <source>
    </source>
</evidence>
<evidence type="ECO:0000305" key="4"/>
<evidence type="ECO:0007829" key="5">
    <source>
        <dbReference type="PDB" id="5MDL"/>
    </source>
</evidence>
<evidence type="ECO:0007829" key="6">
    <source>
        <dbReference type="PDB" id="7ODH"/>
    </source>
</evidence>
<proteinExistence type="evidence at protein level"/>
<organism>
    <name type="scientific">Cupriavidus necator (strain ATCC 17699 / DSM 428 / KCTC 22496 / NCIMB 10442 / H16 / Stanier 337)</name>
    <name type="common">Ralstonia eutropha</name>
    <dbReference type="NCBI Taxonomy" id="381666"/>
    <lineage>
        <taxon>Bacteria</taxon>
        <taxon>Pseudomonadati</taxon>
        <taxon>Pseudomonadota</taxon>
        <taxon>Betaproteobacteria</taxon>
        <taxon>Burkholderiales</taxon>
        <taxon>Burkholderiaceae</taxon>
        <taxon>Cupriavidus</taxon>
    </lineage>
</organism>
<dbReference type="EC" id="1.12.99.6"/>
<dbReference type="EMBL" id="M96433">
    <property type="protein sequence ID" value="AAA16461.1"/>
    <property type="molecule type" value="Unassigned_DNA"/>
</dbReference>
<dbReference type="EMBL" id="AY305378">
    <property type="protein sequence ID" value="AAP85757.1"/>
    <property type="molecule type" value="Genomic_DNA"/>
</dbReference>
<dbReference type="PIR" id="A43255">
    <property type="entry name" value="A43255"/>
</dbReference>
<dbReference type="RefSeq" id="WP_011153926.1">
    <property type="nucleotide sequence ID" value="NC_005241.1"/>
</dbReference>
<dbReference type="PDB" id="3RGW">
    <property type="method" value="X-ray"/>
    <property type="resolution" value="1.50 A"/>
    <property type="chains" value="S=44-360"/>
</dbReference>
<dbReference type="PDB" id="4IUB">
    <property type="method" value="X-ray"/>
    <property type="resolution" value="1.61 A"/>
    <property type="chains" value="S=44-360"/>
</dbReference>
<dbReference type="PDB" id="4IUC">
    <property type="method" value="X-ray"/>
    <property type="resolution" value="1.45 A"/>
    <property type="chains" value="S=44-360"/>
</dbReference>
<dbReference type="PDB" id="4IUD">
    <property type="method" value="X-ray"/>
    <property type="resolution" value="1.45 A"/>
    <property type="chains" value="S=44-360"/>
</dbReference>
<dbReference type="PDB" id="4TTT">
    <property type="method" value="X-ray"/>
    <property type="resolution" value="1.72 A"/>
    <property type="chains" value="S=44-360"/>
</dbReference>
<dbReference type="PDB" id="5D51">
    <property type="method" value="X-ray"/>
    <property type="resolution" value="1.47 A"/>
    <property type="chains" value="S=44-360"/>
</dbReference>
<dbReference type="PDB" id="5MDJ">
    <property type="method" value="X-ray"/>
    <property type="resolution" value="1.48 A"/>
    <property type="chains" value="S=44-360"/>
</dbReference>
<dbReference type="PDB" id="5MDK">
    <property type="method" value="X-ray"/>
    <property type="resolution" value="1.50 A"/>
    <property type="chains" value="S=44-360"/>
</dbReference>
<dbReference type="PDB" id="5MDL">
    <property type="method" value="X-ray"/>
    <property type="resolution" value="1.41 A"/>
    <property type="chains" value="S=44-360"/>
</dbReference>
<dbReference type="PDB" id="7ODG">
    <property type="method" value="X-ray"/>
    <property type="resolution" value="1.62 A"/>
    <property type="chains" value="S=44-360"/>
</dbReference>
<dbReference type="PDB" id="7ODH">
    <property type="method" value="X-ray"/>
    <property type="resolution" value="1.34 A"/>
    <property type="chains" value="S=44-360"/>
</dbReference>
<dbReference type="PDB" id="8POU">
    <property type="method" value="X-ray"/>
    <property type="resolution" value="1.65 A"/>
    <property type="chains" value="S=44-360"/>
</dbReference>
<dbReference type="PDB" id="8POV">
    <property type="method" value="X-ray"/>
    <property type="resolution" value="1.92 A"/>
    <property type="chains" value="S=44-360"/>
</dbReference>
<dbReference type="PDB" id="8POW">
    <property type="method" value="X-ray"/>
    <property type="resolution" value="1.61 A"/>
    <property type="chains" value="S=44-360"/>
</dbReference>
<dbReference type="PDB" id="8POX">
    <property type="method" value="X-ray"/>
    <property type="resolution" value="1.60 A"/>
    <property type="chains" value="S=44-360"/>
</dbReference>
<dbReference type="PDB" id="8POY">
    <property type="method" value="X-ray"/>
    <property type="resolution" value="1.93 A"/>
    <property type="chains" value="S=44-360"/>
</dbReference>
<dbReference type="PDB" id="8POZ">
    <property type="method" value="X-ray"/>
    <property type="resolution" value="1.65 A"/>
    <property type="chains" value="S=44-360"/>
</dbReference>
<dbReference type="PDBsum" id="3RGW"/>
<dbReference type="PDBsum" id="4IUB"/>
<dbReference type="PDBsum" id="4IUC"/>
<dbReference type="PDBsum" id="4IUD"/>
<dbReference type="PDBsum" id="4TTT"/>
<dbReference type="PDBsum" id="5D51"/>
<dbReference type="PDBsum" id="5MDJ"/>
<dbReference type="PDBsum" id="5MDK"/>
<dbReference type="PDBsum" id="5MDL"/>
<dbReference type="PDBsum" id="7ODG"/>
<dbReference type="PDBsum" id="7ODH"/>
<dbReference type="PDBsum" id="8POU"/>
<dbReference type="PDBsum" id="8POV"/>
<dbReference type="PDBsum" id="8POW"/>
<dbReference type="PDBsum" id="8POX"/>
<dbReference type="PDBsum" id="8POY"/>
<dbReference type="PDBsum" id="8POZ"/>
<dbReference type="SMR" id="P31892"/>
<dbReference type="DIP" id="DIP-59145N"/>
<dbReference type="IntAct" id="P31892">
    <property type="interactions" value="1"/>
</dbReference>
<dbReference type="KEGG" id="reh:PHG001"/>
<dbReference type="PATRIC" id="fig|381666.6.peg.1"/>
<dbReference type="eggNOG" id="COG1740">
    <property type="taxonomic scope" value="Bacteria"/>
</dbReference>
<dbReference type="HOGENOM" id="CLU_046107_0_0_4"/>
<dbReference type="OrthoDB" id="9766729at2"/>
<dbReference type="BioCyc" id="MetaCyc:HOXKALCA-MONOMER"/>
<dbReference type="EvolutionaryTrace" id="P31892"/>
<dbReference type="Proteomes" id="UP000008210">
    <property type="component" value="Plasmid megaplasmid pHG1"/>
</dbReference>
<dbReference type="GO" id="GO:0044569">
    <property type="term" value="C:[Ni-Fe] hydrogenase complex"/>
    <property type="evidence" value="ECO:0007669"/>
    <property type="project" value="TreeGrafter"/>
</dbReference>
<dbReference type="GO" id="GO:0009375">
    <property type="term" value="C:ferredoxin hydrogenase complex"/>
    <property type="evidence" value="ECO:0007669"/>
    <property type="project" value="InterPro"/>
</dbReference>
<dbReference type="GO" id="GO:0005886">
    <property type="term" value="C:plasma membrane"/>
    <property type="evidence" value="ECO:0007669"/>
    <property type="project" value="UniProtKB-SubCell"/>
</dbReference>
<dbReference type="GO" id="GO:0051538">
    <property type="term" value="F:3 iron, 4 sulfur cluster binding"/>
    <property type="evidence" value="ECO:0007669"/>
    <property type="project" value="UniProtKB-KW"/>
</dbReference>
<dbReference type="GO" id="GO:0051539">
    <property type="term" value="F:4 iron, 4 sulfur cluster binding"/>
    <property type="evidence" value="ECO:0007669"/>
    <property type="project" value="UniProtKB-KW"/>
</dbReference>
<dbReference type="GO" id="GO:0009055">
    <property type="term" value="F:electron transfer activity"/>
    <property type="evidence" value="ECO:0007669"/>
    <property type="project" value="TreeGrafter"/>
</dbReference>
<dbReference type="GO" id="GO:0008901">
    <property type="term" value="F:ferredoxin hydrogenase activity"/>
    <property type="evidence" value="ECO:0007669"/>
    <property type="project" value="InterPro"/>
</dbReference>
<dbReference type="GO" id="GO:0033748">
    <property type="term" value="F:hydrogenase (acceptor) activity"/>
    <property type="evidence" value="ECO:0007669"/>
    <property type="project" value="UniProtKB-EC"/>
</dbReference>
<dbReference type="GO" id="GO:0046872">
    <property type="term" value="F:metal ion binding"/>
    <property type="evidence" value="ECO:0007669"/>
    <property type="project" value="UniProtKB-KW"/>
</dbReference>
<dbReference type="GO" id="GO:0009061">
    <property type="term" value="P:anaerobic respiration"/>
    <property type="evidence" value="ECO:0007669"/>
    <property type="project" value="TreeGrafter"/>
</dbReference>
<dbReference type="FunFam" id="4.10.480.10:FF:000002">
    <property type="entry name" value="Hydrogenase-1 small chain"/>
    <property type="match status" value="1"/>
</dbReference>
<dbReference type="Gene3D" id="4.10.480.10">
    <property type="entry name" value="Cytochrome-c3 hydrogenase, C-terminal domain"/>
    <property type="match status" value="1"/>
</dbReference>
<dbReference type="Gene3D" id="3.40.50.700">
    <property type="entry name" value="NADH:ubiquinone oxidoreductase-like, 20kDa subunit"/>
    <property type="match status" value="1"/>
</dbReference>
<dbReference type="InterPro" id="IPR027394">
    <property type="entry name" value="Cytochrome-c3_hydrogenase_C"/>
</dbReference>
<dbReference type="InterPro" id="IPR006137">
    <property type="entry name" value="NADH_UbQ_OxRdtase-like_20kDa"/>
</dbReference>
<dbReference type="InterPro" id="IPR037148">
    <property type="entry name" value="NiFe-Hase_small_C_sf"/>
</dbReference>
<dbReference type="InterPro" id="IPR037024">
    <property type="entry name" value="NiFe_Hase_small_N_sf"/>
</dbReference>
<dbReference type="InterPro" id="IPR001821">
    <property type="entry name" value="NiFe_hydrogenase_ssu"/>
</dbReference>
<dbReference type="InterPro" id="IPR006311">
    <property type="entry name" value="TAT_signal"/>
</dbReference>
<dbReference type="InterPro" id="IPR019546">
    <property type="entry name" value="TAT_signal_bac_arc"/>
</dbReference>
<dbReference type="NCBIfam" id="TIGR00391">
    <property type="entry name" value="hydA"/>
    <property type="match status" value="1"/>
</dbReference>
<dbReference type="NCBIfam" id="TIGR01409">
    <property type="entry name" value="TAT_signal_seq"/>
    <property type="match status" value="1"/>
</dbReference>
<dbReference type="PANTHER" id="PTHR30013:SF6">
    <property type="entry name" value="HYDROGENASE-1 SMALL CHAIN"/>
    <property type="match status" value="1"/>
</dbReference>
<dbReference type="PANTHER" id="PTHR30013">
    <property type="entry name" value="NIFE / NIFESE HYDROGENASE SMALL SUBUNIT FAMILY MEMBER"/>
    <property type="match status" value="1"/>
</dbReference>
<dbReference type="Pfam" id="PF14720">
    <property type="entry name" value="NiFe_hyd_SSU_C"/>
    <property type="match status" value="1"/>
</dbReference>
<dbReference type="Pfam" id="PF01058">
    <property type="entry name" value="Oxidored_q6"/>
    <property type="match status" value="1"/>
</dbReference>
<dbReference type="PIRSF" id="PIRSF000310">
    <property type="entry name" value="NiFe_hyd_ssu"/>
    <property type="match status" value="1"/>
</dbReference>
<dbReference type="PRINTS" id="PR00614">
    <property type="entry name" value="NIHGNASESMLL"/>
</dbReference>
<dbReference type="SUPFAM" id="SSF56770">
    <property type="entry name" value="HydA/Nqo6-like"/>
    <property type="match status" value="1"/>
</dbReference>
<dbReference type="PROSITE" id="PS51318">
    <property type="entry name" value="TAT"/>
    <property type="match status" value="1"/>
</dbReference>
<protein>
    <recommendedName>
        <fullName>Uptake hydrogenase small subunit</fullName>
        <ecNumber>1.12.99.6</ecNumber>
    </recommendedName>
    <alternativeName>
        <fullName>Hydrogenlyase</fullName>
    </alternativeName>
    <alternativeName>
        <fullName>Membrane-bound hydrogenase small subunit</fullName>
    </alternativeName>
</protein>
<reference key="1">
    <citation type="journal article" date="1992" name="J. Bacteriol.">
        <title>A gene complex coding for the membrane-bound hydrogenase of Alcaligenes eutrophus H16.</title>
        <authorList>
            <person name="Kortlueke C."/>
            <person name="Horstmann K."/>
            <person name="Schwartz E."/>
            <person name="Rohde M."/>
            <person name="Binsack R."/>
            <person name="Friedrich B."/>
        </authorList>
    </citation>
    <scope>NUCLEOTIDE SEQUENCE [GENOMIC DNA]</scope>
</reference>
<reference key="2">
    <citation type="journal article" date="2003" name="J. Mol. Biol.">
        <title>Complete nucleotide sequence of pHG1: a Ralstonia eutropha H16 megaplasmid encoding key enzymes of H(2)-based lithoautotrophy and anaerobiosis.</title>
        <authorList>
            <person name="Schwartz E."/>
            <person name="Henne A."/>
            <person name="Cramm R."/>
            <person name="Eitinger T."/>
            <person name="Friedrich B."/>
            <person name="Gottschalk G."/>
        </authorList>
    </citation>
    <scope>NUCLEOTIDE SEQUENCE [LARGE SCALE GENOMIC DNA]</scope>
    <source>
        <strain>ATCC 17699 / DSM 428 / KCTC 22496 / NCIMB 10442 / H16 / Stanier 337</strain>
    </source>
</reference>
<reference key="3">
    <citation type="journal article" date="1989" name="Biochim. Biophys. Acta">
        <title>Immunological comparison of subunits isolated from various hydrogenases of aerobic hydrogen bacteria.</title>
        <authorList>
            <person name="Lorenz B."/>
            <person name="Schneider K."/>
            <person name="Kratzin H."/>
            <person name="Schlegel H.G."/>
        </authorList>
    </citation>
    <scope>PROTEIN SEQUENCE OF 44-59</scope>
</reference>
<gene>
    <name type="primary">hoxK</name>
    <name type="ordered locus">PHG001</name>
</gene>
<keyword id="KW-0002">3D-structure</keyword>
<keyword id="KW-0003">3Fe-4S</keyword>
<keyword id="KW-0004">4Fe-4S</keyword>
<keyword id="KW-1003">Cell membrane</keyword>
<keyword id="KW-0903">Direct protein sequencing</keyword>
<keyword id="KW-0408">Iron</keyword>
<keyword id="KW-0411">Iron-sulfur</keyword>
<keyword id="KW-0472">Membrane</keyword>
<keyword id="KW-0479">Metal-binding</keyword>
<keyword id="KW-0560">Oxidoreductase</keyword>
<keyword id="KW-0614">Plasmid</keyword>
<keyword id="KW-1185">Reference proteome</keyword>
<keyword id="KW-0732">Signal</keyword>
<accession>P31892</accession>
<name>MBHS_CUPNH</name>
<feature type="signal peptide" description="Tat-type signal" evidence="2 3">
    <location>
        <begin position="1"/>
        <end position="43"/>
    </location>
</feature>
<feature type="chain" id="PRO_0000013421" description="Uptake hydrogenase small subunit">
    <location>
        <begin position="44"/>
        <end position="360"/>
    </location>
</feature>
<feature type="binding site" evidence="1">
    <location>
        <position position="60"/>
    </location>
    <ligand>
        <name>[4Fe-4S] cluster</name>
        <dbReference type="ChEBI" id="CHEBI:49883"/>
        <label>1</label>
    </ligand>
</feature>
<feature type="binding site" evidence="1">
    <location>
        <position position="63"/>
    </location>
    <ligand>
        <name>[4Fe-4S] cluster</name>
        <dbReference type="ChEBI" id="CHEBI:49883"/>
        <label>1</label>
    </ligand>
</feature>
<feature type="binding site" evidence="1">
    <location>
        <position position="158"/>
    </location>
    <ligand>
        <name>[4Fe-4S] cluster</name>
        <dbReference type="ChEBI" id="CHEBI:49883"/>
        <label>1</label>
    </ligand>
</feature>
<feature type="binding site" evidence="1">
    <location>
        <position position="192"/>
    </location>
    <ligand>
        <name>[4Fe-4S] cluster</name>
        <dbReference type="ChEBI" id="CHEBI:49883"/>
        <label>1</label>
    </ligand>
</feature>
<feature type="binding site" evidence="1">
    <location>
        <position position="230"/>
    </location>
    <ligand>
        <name>[4Fe-4S] cluster</name>
        <dbReference type="ChEBI" id="CHEBI:49883"/>
        <label>2</label>
    </ligand>
</feature>
<feature type="binding site" evidence="1">
    <location>
        <position position="233"/>
    </location>
    <ligand>
        <name>[4Fe-4S] cluster</name>
        <dbReference type="ChEBI" id="CHEBI:49883"/>
        <label>2</label>
    </ligand>
</feature>
<feature type="binding site" evidence="1">
    <location>
        <position position="258"/>
    </location>
    <ligand>
        <name>[4Fe-4S] cluster</name>
        <dbReference type="ChEBI" id="CHEBI:49883"/>
        <label>2</label>
    </ligand>
</feature>
<feature type="binding site" evidence="1">
    <location>
        <position position="264"/>
    </location>
    <ligand>
        <name>[4Fe-4S] cluster</name>
        <dbReference type="ChEBI" id="CHEBI:49883"/>
        <label>2</label>
    </ligand>
</feature>
<feature type="binding site" evidence="1">
    <location>
        <position position="273"/>
    </location>
    <ligand>
        <name>[3Fe-4S] cluster</name>
        <dbReference type="ChEBI" id="CHEBI:21137"/>
    </ligand>
</feature>
<feature type="binding site" evidence="1">
    <location>
        <position position="292"/>
    </location>
    <ligand>
        <name>[3Fe-4S] cluster</name>
        <dbReference type="ChEBI" id="CHEBI:21137"/>
    </ligand>
</feature>
<feature type="binding site" evidence="1">
    <location>
        <position position="295"/>
    </location>
    <ligand>
        <name>[3Fe-4S] cluster</name>
        <dbReference type="ChEBI" id="CHEBI:21137"/>
    </ligand>
</feature>
<feature type="strand" evidence="6">
    <location>
        <begin position="50"/>
        <end position="56"/>
    </location>
</feature>
<feature type="helix" evidence="6">
    <location>
        <begin position="62"/>
        <end position="68"/>
    </location>
</feature>
<feature type="turn" evidence="6">
    <location>
        <begin position="71"/>
        <end position="74"/>
    </location>
</feature>
<feature type="helix" evidence="6">
    <location>
        <begin position="75"/>
        <end position="81"/>
    </location>
</feature>
<feature type="strand" evidence="6">
    <location>
        <begin position="83"/>
        <end position="88"/>
    </location>
</feature>
<feature type="turn" evidence="6">
    <location>
        <begin position="89"/>
        <end position="91"/>
    </location>
</feature>
<feature type="helix" evidence="6">
    <location>
        <begin position="96"/>
        <end position="109"/>
    </location>
</feature>
<feature type="turn" evidence="6">
    <location>
        <begin position="110"/>
        <end position="112"/>
    </location>
</feature>
<feature type="strand" evidence="6">
    <location>
        <begin position="114"/>
        <end position="121"/>
    </location>
</feature>
<feature type="helix" evidence="6">
    <location>
        <begin position="126"/>
        <end position="128"/>
    </location>
</feature>
<feature type="strand" evidence="6">
    <location>
        <begin position="131"/>
        <end position="133"/>
    </location>
</feature>
<feature type="helix" evidence="6">
    <location>
        <begin position="138"/>
        <end position="146"/>
    </location>
</feature>
<feature type="strand" evidence="6">
    <location>
        <begin position="150"/>
        <end position="155"/>
    </location>
</feature>
<feature type="helix" evidence="6">
    <location>
        <begin position="156"/>
        <end position="160"/>
    </location>
</feature>
<feature type="helix" evidence="6">
    <location>
        <begin position="164"/>
        <end position="166"/>
    </location>
</feature>
<feature type="helix" evidence="6">
    <location>
        <begin position="177"/>
        <end position="179"/>
    </location>
</feature>
<feature type="strand" evidence="6">
    <location>
        <begin position="186"/>
        <end position="189"/>
    </location>
</feature>
<feature type="strand" evidence="6">
    <location>
        <begin position="191"/>
        <end position="193"/>
    </location>
</feature>
<feature type="helix" evidence="6">
    <location>
        <begin position="196"/>
        <end position="209"/>
    </location>
</feature>
<feature type="helix" evidence="6">
    <location>
        <begin position="222"/>
        <end position="225"/>
    </location>
</feature>
<feature type="strand" evidence="6">
    <location>
        <begin position="226"/>
        <end position="228"/>
    </location>
</feature>
<feature type="helix" evidence="6">
    <location>
        <begin position="229"/>
        <end position="232"/>
    </location>
</feature>
<feature type="helix" evidence="6">
    <location>
        <begin position="236"/>
        <end position="240"/>
    </location>
</feature>
<feature type="helix" evidence="6">
    <location>
        <begin position="251"/>
        <end position="254"/>
    </location>
</feature>
<feature type="helix" evidence="6">
    <location>
        <begin position="260"/>
        <end position="262"/>
    </location>
</feature>
<feature type="helix" evidence="6">
    <location>
        <begin position="266"/>
        <end position="268"/>
    </location>
</feature>
<feature type="strand" evidence="5">
    <location>
        <begin position="270"/>
        <end position="272"/>
    </location>
</feature>
<feature type="turn" evidence="6">
    <location>
        <begin position="273"/>
        <end position="275"/>
    </location>
</feature>
<feature type="turn" evidence="6">
    <location>
        <begin position="279"/>
        <end position="282"/>
    </location>
</feature>
<feature type="turn" evidence="6">
    <location>
        <begin position="285"/>
        <end position="289"/>
    </location>
</feature>
<feature type="helix" evidence="6">
    <location>
        <begin position="300"/>
        <end position="302"/>
    </location>
</feature>
<feature type="helix" evidence="5">
    <location>
        <begin position="313"/>
        <end position="315"/>
    </location>
</feature>
<sequence>MVETFYEVMRRQGISRRSFLKYCSLTATSLGLGPSFLPQIAHAMETKPRTPVLWLHGLECTCCSESFIRSAHPLAKDVVLSMISLDYDDTLMAAAGHQAEAILEEIMTKYKGNYILAVEGNPPLNQDGMSCIIGGRPFIEQLKYVAKDAKAIISWGSCASWGCVQAAKPNPTQATPVHKVITDKPIIKVPGCPPIAEVMTGVITYMLTFDRIPELDRQGRPKMFYSQRIHDKCYRRPHFDAGQFVEEWDDESARKGFCLYKMGCKGPTTYNACSTTRWNEGTSFPIQSGHGCIGCSEDGFWDKGSFYDRLTGISQFGVEANADKIGGTASVVVGAAVTAHAAASAIKRASKKNETSGSEH</sequence>